<keyword id="KW-0963">Cytoplasm</keyword>
<keyword id="KW-0687">Ribonucleoprotein</keyword>
<keyword id="KW-0689">Ribosomal protein</keyword>
<comment type="function">
    <text evidence="1">Required for the assembly and/or stability of the 40S ribosomal subunit. Required for the processing of the 20S rRNA-precursor to mature 18S rRNA in a late step of the maturation of 40S ribosomal subunits.</text>
</comment>
<comment type="subunit">
    <text evidence="1">Component of the small ribosomal subunit. Mature ribosomes consist of a small (40S) and a large (60S) subunit. The 40S subunit contains about 33 different proteins and 1 molecule of RNA (18S). The 60S subunit contains about 49 different proteins and 3 molecules of RNA (28S, 5.8S and 5S). Interacts with ribosomal protein S21.</text>
</comment>
<comment type="subcellular location">
    <subcellularLocation>
        <location evidence="1">Cytoplasm</location>
    </subcellularLocation>
</comment>
<comment type="similarity">
    <text evidence="1">Belongs to the universal ribosomal protein uS2 family.</text>
</comment>
<name>RSSA_SCHJA</name>
<dbReference type="EMBL" id="AY815534">
    <property type="protein sequence ID" value="AAW27266.1"/>
    <property type="molecule type" value="mRNA"/>
</dbReference>
<dbReference type="SMR" id="Q5DA90"/>
<dbReference type="OrthoDB" id="414863at2759"/>
<dbReference type="GO" id="GO:0022627">
    <property type="term" value="C:cytosolic small ribosomal subunit"/>
    <property type="evidence" value="ECO:0007669"/>
    <property type="project" value="UniProtKB-UniRule"/>
</dbReference>
<dbReference type="GO" id="GO:0003735">
    <property type="term" value="F:structural constituent of ribosome"/>
    <property type="evidence" value="ECO:0007669"/>
    <property type="project" value="UniProtKB-UniRule"/>
</dbReference>
<dbReference type="GO" id="GO:0000028">
    <property type="term" value="P:ribosomal small subunit assembly"/>
    <property type="evidence" value="ECO:0007669"/>
    <property type="project" value="UniProtKB-UniRule"/>
</dbReference>
<dbReference type="GO" id="GO:0006412">
    <property type="term" value="P:translation"/>
    <property type="evidence" value="ECO:0007669"/>
    <property type="project" value="UniProtKB-UniRule"/>
</dbReference>
<dbReference type="CDD" id="cd01425">
    <property type="entry name" value="RPS2"/>
    <property type="match status" value="1"/>
</dbReference>
<dbReference type="FunFam" id="3.40.50.10490:FF:000012">
    <property type="entry name" value="40S ribosomal protein SA"/>
    <property type="match status" value="1"/>
</dbReference>
<dbReference type="Gene3D" id="3.40.50.10490">
    <property type="entry name" value="Glucose-6-phosphate isomerase like protein, domain 1"/>
    <property type="match status" value="1"/>
</dbReference>
<dbReference type="HAMAP" id="MF_03015">
    <property type="entry name" value="Ribosomal_S2_euk"/>
    <property type="match status" value="1"/>
</dbReference>
<dbReference type="InterPro" id="IPR001865">
    <property type="entry name" value="Ribosomal_uS2"/>
</dbReference>
<dbReference type="InterPro" id="IPR018130">
    <property type="entry name" value="Ribosomal_uS2_CS"/>
</dbReference>
<dbReference type="InterPro" id="IPR027498">
    <property type="entry name" value="Ribosomal_uS2_euk"/>
</dbReference>
<dbReference type="InterPro" id="IPR005707">
    <property type="entry name" value="Ribosomal_uS2_euk/arc"/>
</dbReference>
<dbReference type="InterPro" id="IPR023591">
    <property type="entry name" value="Ribosomal_uS2_flav_dom_sf"/>
</dbReference>
<dbReference type="NCBIfam" id="TIGR01012">
    <property type="entry name" value="uS2_euk_arch"/>
    <property type="match status" value="1"/>
</dbReference>
<dbReference type="PANTHER" id="PTHR11489">
    <property type="entry name" value="40S RIBOSOMAL PROTEIN SA"/>
    <property type="match status" value="1"/>
</dbReference>
<dbReference type="Pfam" id="PF00318">
    <property type="entry name" value="Ribosomal_S2"/>
    <property type="match status" value="2"/>
</dbReference>
<dbReference type="PRINTS" id="PR00395">
    <property type="entry name" value="RIBOSOMALS2"/>
</dbReference>
<dbReference type="SUPFAM" id="SSF52313">
    <property type="entry name" value="Ribosomal protein S2"/>
    <property type="match status" value="1"/>
</dbReference>
<dbReference type="PROSITE" id="PS00963">
    <property type="entry name" value="RIBOSOMAL_S2_2"/>
    <property type="match status" value="1"/>
</dbReference>
<organism>
    <name type="scientific">Schistosoma japonicum</name>
    <name type="common">Blood fluke</name>
    <dbReference type="NCBI Taxonomy" id="6182"/>
    <lineage>
        <taxon>Eukaryota</taxon>
        <taxon>Metazoa</taxon>
        <taxon>Spiralia</taxon>
        <taxon>Lophotrochozoa</taxon>
        <taxon>Platyhelminthes</taxon>
        <taxon>Trematoda</taxon>
        <taxon>Digenea</taxon>
        <taxon>Strigeidida</taxon>
        <taxon>Schistosomatoidea</taxon>
        <taxon>Schistosomatidae</taxon>
        <taxon>Schistosoma</taxon>
    </lineage>
</organism>
<feature type="initiator methionine" description="Removed" evidence="1">
    <location>
        <position position="1"/>
    </location>
</feature>
<feature type="chain" id="PRO_0000371599" description="Small ribosomal subunit protein uS2">
    <location>
        <begin position="2"/>
        <end position="279"/>
    </location>
</feature>
<proteinExistence type="evidence at transcript level"/>
<accession>Q5DA90</accession>
<protein>
    <recommendedName>
        <fullName evidence="1">Small ribosomal subunit protein uS2</fullName>
    </recommendedName>
    <alternativeName>
        <fullName evidence="2">40S ribosomal protein SA</fullName>
    </alternativeName>
</protein>
<gene>
    <name type="ORF">SJCHGC06078</name>
</gene>
<sequence>MSGGYPALELSAEDLRLMLAAHVHVGETNMNFQMSTYVHGRTKDNFHIIKLDKTWEKILLSARAIAAIDTASDVFAIGSRPFSQRAVLKFANYTGATAMAGRFTPGAFTNQKQSCFREPRLLVVSDPLSDHQAVMEASSVNVPLIALCNTDSPLTRVDIVIPCNNKSTHSIAVVWWFLAREVRRIRGEDTRLQQWSVLPDLFLYRDPNEEEQNVEDPEDARLEPVIPGADAEAAETWGVEPSMPVGSLGDMGIAAPGYGPVGGTAGGWSNLDADPTETW</sequence>
<evidence type="ECO:0000255" key="1">
    <source>
        <dbReference type="HAMAP-Rule" id="MF_03015"/>
    </source>
</evidence>
<evidence type="ECO:0000305" key="2"/>
<reference key="1">
    <citation type="journal article" date="2006" name="PLoS Pathog.">
        <title>New perspectives on host-parasite interplay by comparative transcriptomic and proteomic analyses of Schistosoma japonicum.</title>
        <authorList>
            <person name="Liu F."/>
            <person name="Lu J."/>
            <person name="Hu W."/>
            <person name="Wang S.-Y."/>
            <person name="Cui S.-J."/>
            <person name="Chi M."/>
            <person name="Yan Q."/>
            <person name="Wang X.-R."/>
            <person name="Song H.-D."/>
            <person name="Xu X.-N."/>
            <person name="Wang J.-J."/>
            <person name="Zhang X.-L."/>
            <person name="Zhang X."/>
            <person name="Wang Z.-Q."/>
            <person name="Xue C.-L."/>
            <person name="Brindley P.J."/>
            <person name="McManus D.P."/>
            <person name="Yang P.-Y."/>
            <person name="Feng Z."/>
            <person name="Chen Z."/>
            <person name="Han Z.-G."/>
        </authorList>
    </citation>
    <scope>NUCLEOTIDE SEQUENCE [LARGE SCALE MRNA]</scope>
</reference>